<sequence>MKANELRALDDAQLREKLAEYKVELFNLRFQKATGKLTNTARPRLVKKEIARILTILRERELAQAELG</sequence>
<comment type="similarity">
    <text evidence="1">Belongs to the universal ribosomal protein uL29 family.</text>
</comment>
<accession>B9LJE0</accession>
<organism>
    <name type="scientific">Chloroflexus aurantiacus (strain ATCC 29364 / DSM 637 / Y-400-fl)</name>
    <dbReference type="NCBI Taxonomy" id="480224"/>
    <lineage>
        <taxon>Bacteria</taxon>
        <taxon>Bacillati</taxon>
        <taxon>Chloroflexota</taxon>
        <taxon>Chloroflexia</taxon>
        <taxon>Chloroflexales</taxon>
        <taxon>Chloroflexineae</taxon>
        <taxon>Chloroflexaceae</taxon>
        <taxon>Chloroflexus</taxon>
    </lineage>
</organism>
<name>RL29_CHLSY</name>
<keyword id="KW-0687">Ribonucleoprotein</keyword>
<keyword id="KW-0689">Ribosomal protein</keyword>
<gene>
    <name evidence="1" type="primary">rpmC</name>
    <name type="ordered locus">Chy400_2564</name>
</gene>
<reference key="1">
    <citation type="submission" date="2009-01" db="EMBL/GenBank/DDBJ databases">
        <title>Complete sequence of Chloroflexus sp. Y-400-fl.</title>
        <authorList>
            <consortium name="US DOE Joint Genome Institute"/>
            <person name="Lucas S."/>
            <person name="Copeland A."/>
            <person name="Lapidus A."/>
            <person name="Glavina del Rio T."/>
            <person name="Dalin E."/>
            <person name="Tice H."/>
            <person name="Bruce D."/>
            <person name="Goodwin L."/>
            <person name="Pitluck S."/>
            <person name="Sims D."/>
            <person name="Kiss H."/>
            <person name="Brettin T."/>
            <person name="Detter J.C."/>
            <person name="Han C."/>
            <person name="Larimer F."/>
            <person name="Land M."/>
            <person name="Hauser L."/>
            <person name="Kyrpides N."/>
            <person name="Ovchinnikova G."/>
            <person name="Bryant D.A."/>
            <person name="Richardson P."/>
        </authorList>
    </citation>
    <scope>NUCLEOTIDE SEQUENCE [LARGE SCALE GENOMIC DNA]</scope>
    <source>
        <strain>ATCC 29364 / DSM 637 / Y-400-fl</strain>
    </source>
</reference>
<protein>
    <recommendedName>
        <fullName evidence="1">Large ribosomal subunit protein uL29</fullName>
    </recommendedName>
    <alternativeName>
        <fullName evidence="2">50S ribosomal protein L29</fullName>
    </alternativeName>
</protein>
<feature type="chain" id="PRO_1000194005" description="Large ribosomal subunit protein uL29">
    <location>
        <begin position="1"/>
        <end position="68"/>
    </location>
</feature>
<dbReference type="EMBL" id="CP001364">
    <property type="protein sequence ID" value="ACM53956.1"/>
    <property type="molecule type" value="Genomic_DNA"/>
</dbReference>
<dbReference type="SMR" id="B9LJE0"/>
<dbReference type="KEGG" id="chl:Chy400_2564"/>
<dbReference type="HOGENOM" id="CLU_158491_3_3_0"/>
<dbReference type="OrthoDB" id="9815192at2"/>
<dbReference type="GO" id="GO:0022625">
    <property type="term" value="C:cytosolic large ribosomal subunit"/>
    <property type="evidence" value="ECO:0007669"/>
    <property type="project" value="TreeGrafter"/>
</dbReference>
<dbReference type="GO" id="GO:0003735">
    <property type="term" value="F:structural constituent of ribosome"/>
    <property type="evidence" value="ECO:0007669"/>
    <property type="project" value="InterPro"/>
</dbReference>
<dbReference type="GO" id="GO:0006412">
    <property type="term" value="P:translation"/>
    <property type="evidence" value="ECO:0007669"/>
    <property type="project" value="UniProtKB-UniRule"/>
</dbReference>
<dbReference type="CDD" id="cd00427">
    <property type="entry name" value="Ribosomal_L29_HIP"/>
    <property type="match status" value="1"/>
</dbReference>
<dbReference type="FunFam" id="1.10.287.310:FF:000001">
    <property type="entry name" value="50S ribosomal protein L29"/>
    <property type="match status" value="1"/>
</dbReference>
<dbReference type="Gene3D" id="1.10.287.310">
    <property type="match status" value="1"/>
</dbReference>
<dbReference type="HAMAP" id="MF_00374">
    <property type="entry name" value="Ribosomal_uL29"/>
    <property type="match status" value="1"/>
</dbReference>
<dbReference type="InterPro" id="IPR050063">
    <property type="entry name" value="Ribosomal_protein_uL29"/>
</dbReference>
<dbReference type="InterPro" id="IPR001854">
    <property type="entry name" value="Ribosomal_uL29"/>
</dbReference>
<dbReference type="InterPro" id="IPR036049">
    <property type="entry name" value="Ribosomal_uL29_sf"/>
</dbReference>
<dbReference type="NCBIfam" id="TIGR00012">
    <property type="entry name" value="L29"/>
    <property type="match status" value="1"/>
</dbReference>
<dbReference type="PANTHER" id="PTHR10916">
    <property type="entry name" value="60S RIBOSOMAL PROTEIN L35/50S RIBOSOMAL PROTEIN L29"/>
    <property type="match status" value="1"/>
</dbReference>
<dbReference type="PANTHER" id="PTHR10916:SF0">
    <property type="entry name" value="LARGE RIBOSOMAL SUBUNIT PROTEIN UL29C"/>
    <property type="match status" value="1"/>
</dbReference>
<dbReference type="Pfam" id="PF00831">
    <property type="entry name" value="Ribosomal_L29"/>
    <property type="match status" value="1"/>
</dbReference>
<dbReference type="SUPFAM" id="SSF46561">
    <property type="entry name" value="Ribosomal protein L29 (L29p)"/>
    <property type="match status" value="1"/>
</dbReference>
<evidence type="ECO:0000255" key="1">
    <source>
        <dbReference type="HAMAP-Rule" id="MF_00374"/>
    </source>
</evidence>
<evidence type="ECO:0000305" key="2"/>
<proteinExistence type="inferred from homology"/>